<gene>
    <name type="primary">dlpC</name>
    <name type="ORF">DDB_G0271628</name>
</gene>
<comment type="function">
    <text evidence="4">Involved in cytokinesis. May hydrolyze GTP.</text>
</comment>
<comment type="catalytic activity">
    <reaction>
        <text>GTP + H2O = GDP + phosphate + H(+)</text>
        <dbReference type="Rhea" id="RHEA:19669"/>
        <dbReference type="ChEBI" id="CHEBI:15377"/>
        <dbReference type="ChEBI" id="CHEBI:15378"/>
        <dbReference type="ChEBI" id="CHEBI:37565"/>
        <dbReference type="ChEBI" id="CHEBI:43474"/>
        <dbReference type="ChEBI" id="CHEBI:58189"/>
        <dbReference type="EC" id="3.6.5.5"/>
    </reaction>
</comment>
<comment type="subcellular location">
    <subcellularLocation>
        <location evidence="5">Cytoplasm</location>
    </subcellularLocation>
</comment>
<comment type="developmental stage">
    <text evidence="4">Expression begins during cell cycle progression, between 12 and 24 hours after germination. Reach a maximum around mid-log phase and disappear during the stationary phase.</text>
</comment>
<comment type="disruption phenotype">
    <text evidence="4">Produced cells are larger and a large amount of them contained more than two nuclei.</text>
</comment>
<comment type="similarity">
    <text evidence="2">Belongs to the TRAFAC class dynamin-like GTPase superfamily. Dynamin/Fzo/YdjA family.</text>
</comment>
<name>DLPC_DICDI</name>
<evidence type="ECO:0000255" key="1"/>
<evidence type="ECO:0000255" key="2">
    <source>
        <dbReference type="PROSITE-ProRule" id="PRU01055"/>
    </source>
</evidence>
<evidence type="ECO:0000256" key="3">
    <source>
        <dbReference type="SAM" id="MobiDB-lite"/>
    </source>
</evidence>
<evidence type="ECO:0000269" key="4">
    <source>
    </source>
</evidence>
<evidence type="ECO:0000305" key="5"/>
<keyword id="KW-0131">Cell cycle</keyword>
<keyword id="KW-0132">Cell division</keyword>
<keyword id="KW-0175">Coiled coil</keyword>
<keyword id="KW-0963">Cytoplasm</keyword>
<keyword id="KW-0342">GTP-binding</keyword>
<keyword id="KW-0378">Hydrolase</keyword>
<keyword id="KW-0505">Motor protein</keyword>
<keyword id="KW-0547">Nucleotide-binding</keyword>
<keyword id="KW-1185">Reference proteome</keyword>
<accession>Q55AX0</accession>
<accession>Q86JH7</accession>
<organism>
    <name type="scientific">Dictyostelium discoideum</name>
    <name type="common">Social amoeba</name>
    <dbReference type="NCBI Taxonomy" id="44689"/>
    <lineage>
        <taxon>Eukaryota</taxon>
        <taxon>Amoebozoa</taxon>
        <taxon>Evosea</taxon>
        <taxon>Eumycetozoa</taxon>
        <taxon>Dictyostelia</taxon>
        <taxon>Dictyosteliales</taxon>
        <taxon>Dictyosteliaceae</taxon>
        <taxon>Dictyostelium</taxon>
    </lineage>
</organism>
<sequence length="904" mass="104370">MSHQQQQAHFDISSNSTLTTNTIATTTNASVSSSPQLNKAQMAIAEAMALKMHEEEKKKREEKKRKRDNEELLSKQVRTKLENERKKLDDSESINASTNQELYSLFNDLQMISHDHNISFDTPELVVVGMQSDGKSSFIESLLGFQFNIVETNIGTRRPLIIQMINNPSKQQPSCRFKKEDYSNSYGGSSSSTSTTSGNSNHNTDKQQNVSSSQGGGGGSNNLNEDKWEEYETPVNELTEEIIRRTNERTGRAGDRVSSIPIFLRVEFAHCSNLNIYDTPGFRKGGDERLKYEISEMVKKLIEPKNRIIVCLEQSNVEWANTISRPLVKKIDPDFSRTILVNTKFDNRVKELRNRESAHKYLEGEGIIAQKKPFFISLPLKRNLETHRFKDAMKETFLDDYRKLLEIGFDENRFGGQIGIYKVRQYVENLLHEKYQQNLLPSMLQLESICKKTEADIVRVKKELSDNNIVTLKEKVMRFVSNFNGQIERLLEGSVVGDPDEFGQTLLQEKENCSVQPWPGYNFDFDIQNSNYSLYGGAQYERLLNEFEFVIHSKEFPETSINEVASAIGVSKSHNSPIYELAATNIFQTKSKKVLLPLIDIVLQRSSYIMKRLFDISVSILGKDENESSHTVSLYEHFLKELQSQYEKFIQTIESECKSRLKDDFEMFTKIVDWNLLSGLTEIKPYNYLKVSPEETKQRVISIMDCKKLEDEPLSRSRNIDDDTYQKVCMIAGRLFSGIRFFFSKLIRNKLNAFFLDPMFQKLGSFVTDYFSKLNDQKYEEMFQLGLKELENKLHKLEFQLIDCKKNRDKFKDVYNRMKQSLNQNQNQNSSSSSNSASSSNNNVIIKHQQSLNGKFSTPDKNSLTMSPFTSPFTQSNYHQHNNNNYQINQQPLDINNDHYFDQN</sequence>
<reference key="1">
    <citation type="journal article" date="2002" name="Nature">
        <title>Sequence and analysis of chromosome 2 of Dictyostelium discoideum.</title>
        <authorList>
            <person name="Gloeckner G."/>
            <person name="Eichinger L."/>
            <person name="Szafranski K."/>
            <person name="Pachebat J.A."/>
            <person name="Bankier A.T."/>
            <person name="Dear P.H."/>
            <person name="Lehmann R."/>
            <person name="Baumgart C."/>
            <person name="Parra G."/>
            <person name="Abril J.F."/>
            <person name="Guigo R."/>
            <person name="Kumpf K."/>
            <person name="Tunggal B."/>
            <person name="Cox E.C."/>
            <person name="Quail M.A."/>
            <person name="Platzer M."/>
            <person name="Rosenthal A."/>
            <person name="Noegel A.A."/>
        </authorList>
    </citation>
    <scope>NUCLEOTIDE SEQUENCE [LARGE SCALE GENOMIC DNA]</scope>
    <source>
        <strain>AX4</strain>
    </source>
</reference>
<reference key="2">
    <citation type="journal article" date="2005" name="Nature">
        <title>The genome of the social amoeba Dictyostelium discoideum.</title>
        <authorList>
            <person name="Eichinger L."/>
            <person name="Pachebat J.A."/>
            <person name="Gloeckner G."/>
            <person name="Rajandream M.A."/>
            <person name="Sucgang R."/>
            <person name="Berriman M."/>
            <person name="Song J."/>
            <person name="Olsen R."/>
            <person name="Szafranski K."/>
            <person name="Xu Q."/>
            <person name="Tunggal B."/>
            <person name="Kummerfeld S."/>
            <person name="Madera M."/>
            <person name="Konfortov B.A."/>
            <person name="Rivero F."/>
            <person name="Bankier A.T."/>
            <person name="Lehmann R."/>
            <person name="Hamlin N."/>
            <person name="Davies R."/>
            <person name="Gaudet P."/>
            <person name="Fey P."/>
            <person name="Pilcher K."/>
            <person name="Chen G."/>
            <person name="Saunders D."/>
            <person name="Sodergren E.J."/>
            <person name="Davis P."/>
            <person name="Kerhornou A."/>
            <person name="Nie X."/>
            <person name="Hall N."/>
            <person name="Anjard C."/>
            <person name="Hemphill L."/>
            <person name="Bason N."/>
            <person name="Farbrother P."/>
            <person name="Desany B."/>
            <person name="Just E."/>
            <person name="Morio T."/>
            <person name="Rost R."/>
            <person name="Churcher C.M."/>
            <person name="Cooper J."/>
            <person name="Haydock S."/>
            <person name="van Driessche N."/>
            <person name="Cronin A."/>
            <person name="Goodhead I."/>
            <person name="Muzny D.M."/>
            <person name="Mourier T."/>
            <person name="Pain A."/>
            <person name="Lu M."/>
            <person name="Harper D."/>
            <person name="Lindsay R."/>
            <person name="Hauser H."/>
            <person name="James K.D."/>
            <person name="Quiles M."/>
            <person name="Madan Babu M."/>
            <person name="Saito T."/>
            <person name="Buchrieser C."/>
            <person name="Wardroper A."/>
            <person name="Felder M."/>
            <person name="Thangavelu M."/>
            <person name="Johnson D."/>
            <person name="Knights A."/>
            <person name="Loulseged H."/>
            <person name="Mungall K.L."/>
            <person name="Oliver K."/>
            <person name="Price C."/>
            <person name="Quail M.A."/>
            <person name="Urushihara H."/>
            <person name="Hernandez J."/>
            <person name="Rabbinowitsch E."/>
            <person name="Steffen D."/>
            <person name="Sanders M."/>
            <person name="Ma J."/>
            <person name="Kohara Y."/>
            <person name="Sharp S."/>
            <person name="Simmonds M.N."/>
            <person name="Spiegler S."/>
            <person name="Tivey A."/>
            <person name="Sugano S."/>
            <person name="White B."/>
            <person name="Walker D."/>
            <person name="Woodward J.R."/>
            <person name="Winckler T."/>
            <person name="Tanaka Y."/>
            <person name="Shaulsky G."/>
            <person name="Schleicher M."/>
            <person name="Weinstock G.M."/>
            <person name="Rosenthal A."/>
            <person name="Cox E.C."/>
            <person name="Chisholm R.L."/>
            <person name="Gibbs R.A."/>
            <person name="Loomis W.F."/>
            <person name="Platzer M."/>
            <person name="Kay R.R."/>
            <person name="Williams J.G."/>
            <person name="Dear P.H."/>
            <person name="Noegel A.A."/>
            <person name="Barrell B.G."/>
            <person name="Kuspa A."/>
        </authorList>
    </citation>
    <scope>NUCLEOTIDE SEQUENCE [LARGE SCALE GENOMIC DNA]</scope>
    <source>
        <strain>AX4</strain>
    </source>
</reference>
<reference key="3">
    <citation type="journal article" date="2008" name="Proc. Natl. Acad. Sci. U.S.A.">
        <title>Evolutionary linkage between eukaryotic cytokinesis and chloroplast division by dynamin proteins.</title>
        <authorList>
            <person name="Miyagishima S.Y."/>
            <person name="Kuwayama H."/>
            <person name="Urushihara H."/>
            <person name="Nakanishi H."/>
        </authorList>
    </citation>
    <scope>FUNCTION</scope>
    <scope>DISRUPTION PHENOTYPE</scope>
    <scope>DEVELOPMENTAL STAGE</scope>
</reference>
<protein>
    <recommendedName>
        <fullName>Dynamin-like protein C</fullName>
        <ecNumber>3.6.5.5</ecNumber>
    </recommendedName>
</protein>
<proteinExistence type="evidence at transcript level"/>
<feature type="chain" id="PRO_0000371339" description="Dynamin-like protein C">
    <location>
        <begin position="1"/>
        <end position="904"/>
    </location>
</feature>
<feature type="domain" description="Dynamin-type G" evidence="2">
    <location>
        <begin position="119"/>
        <end position="441"/>
    </location>
</feature>
<feature type="region of interest" description="Disordered" evidence="3">
    <location>
        <begin position="53"/>
        <end position="93"/>
    </location>
</feature>
<feature type="region of interest" description="G1 motif" evidence="2">
    <location>
        <begin position="129"/>
        <end position="136"/>
    </location>
</feature>
<feature type="region of interest" description="G2 motif" evidence="2">
    <location>
        <begin position="155"/>
        <end position="157"/>
    </location>
</feature>
<feature type="region of interest" description="Disordered" evidence="3">
    <location>
        <begin position="169"/>
        <end position="227"/>
    </location>
</feature>
<feature type="region of interest" description="G3 motif" evidence="2">
    <location>
        <begin position="278"/>
        <end position="281"/>
    </location>
</feature>
<feature type="region of interest" description="G4 motif" evidence="2">
    <location>
        <begin position="343"/>
        <end position="346"/>
    </location>
</feature>
<feature type="region of interest" description="G5 motif" evidence="2">
    <location>
        <begin position="378"/>
        <end position="381"/>
    </location>
</feature>
<feature type="region of interest" description="Disordered" evidence="3">
    <location>
        <begin position="821"/>
        <end position="840"/>
    </location>
</feature>
<feature type="region of interest" description="Disordered" evidence="3">
    <location>
        <begin position="853"/>
        <end position="904"/>
    </location>
</feature>
<feature type="coiled-coil region" evidence="1">
    <location>
        <begin position="44"/>
        <end position="102"/>
    </location>
</feature>
<feature type="coiled-coil region" evidence="1">
    <location>
        <begin position="781"/>
        <end position="811"/>
    </location>
</feature>
<feature type="compositionally biased region" description="Basic and acidic residues" evidence="3">
    <location>
        <begin position="67"/>
        <end position="90"/>
    </location>
</feature>
<feature type="compositionally biased region" description="Low complexity" evidence="3">
    <location>
        <begin position="183"/>
        <end position="213"/>
    </location>
</feature>
<feature type="compositionally biased region" description="Polar residues" evidence="3">
    <location>
        <begin position="853"/>
        <end position="876"/>
    </location>
</feature>
<feature type="compositionally biased region" description="Low complexity" evidence="3">
    <location>
        <begin position="877"/>
        <end position="891"/>
    </location>
</feature>
<feature type="binding site" evidence="1">
    <location>
        <begin position="129"/>
        <end position="136"/>
    </location>
    <ligand>
        <name>GTP</name>
        <dbReference type="ChEBI" id="CHEBI:37565"/>
    </ligand>
</feature>
<feature type="binding site" evidence="1">
    <location>
        <begin position="278"/>
        <end position="282"/>
    </location>
    <ligand>
        <name>GTP</name>
        <dbReference type="ChEBI" id="CHEBI:37565"/>
    </ligand>
</feature>
<feature type="binding site" evidence="1">
    <location>
        <begin position="343"/>
        <end position="346"/>
    </location>
    <ligand>
        <name>GTP</name>
        <dbReference type="ChEBI" id="CHEBI:37565"/>
    </ligand>
</feature>
<dbReference type="EC" id="3.6.5.5"/>
<dbReference type="EMBL" id="AAFI02000006">
    <property type="protein sequence ID" value="EAL71678.2"/>
    <property type="molecule type" value="Genomic_DNA"/>
</dbReference>
<dbReference type="RefSeq" id="XP_645576.2">
    <property type="nucleotide sequence ID" value="XM_640484.2"/>
</dbReference>
<dbReference type="FunCoup" id="Q55AX0">
    <property type="interactions" value="1"/>
</dbReference>
<dbReference type="STRING" id="44689.Q55AX0"/>
<dbReference type="PaxDb" id="44689-DDB0302372"/>
<dbReference type="EnsemblProtists" id="EAL71678">
    <property type="protein sequence ID" value="EAL71678"/>
    <property type="gene ID" value="DDB_G0271628"/>
</dbReference>
<dbReference type="GeneID" id="8618029"/>
<dbReference type="KEGG" id="ddi:DDB_G0271628"/>
<dbReference type="dictyBase" id="DDB_G0271628">
    <property type="gene designation" value="dlpC"/>
</dbReference>
<dbReference type="VEuPathDB" id="AmoebaDB:DDB_G0271628"/>
<dbReference type="eggNOG" id="KOG0446">
    <property type="taxonomic scope" value="Eukaryota"/>
</dbReference>
<dbReference type="HOGENOM" id="CLU_320910_0_0_1"/>
<dbReference type="InParanoid" id="Q55AX0"/>
<dbReference type="OMA" id="MALKMHE"/>
<dbReference type="PhylomeDB" id="Q55AX0"/>
<dbReference type="BRENDA" id="3.6.5.5">
    <property type="organism ID" value="1939"/>
</dbReference>
<dbReference type="PRO" id="PR:Q55AX0"/>
<dbReference type="Proteomes" id="UP000002195">
    <property type="component" value="Chromosome 2"/>
</dbReference>
<dbReference type="GO" id="GO:0005737">
    <property type="term" value="C:cytoplasm"/>
    <property type="evidence" value="ECO:0000318"/>
    <property type="project" value="GO_Central"/>
</dbReference>
<dbReference type="GO" id="GO:0016020">
    <property type="term" value="C:membrane"/>
    <property type="evidence" value="ECO:0000318"/>
    <property type="project" value="GO_Central"/>
</dbReference>
<dbReference type="GO" id="GO:0005874">
    <property type="term" value="C:microtubule"/>
    <property type="evidence" value="ECO:0000318"/>
    <property type="project" value="GO_Central"/>
</dbReference>
<dbReference type="GO" id="GO:0005525">
    <property type="term" value="F:GTP binding"/>
    <property type="evidence" value="ECO:0007669"/>
    <property type="project" value="UniProtKB-KW"/>
</dbReference>
<dbReference type="GO" id="GO:0003924">
    <property type="term" value="F:GTPase activity"/>
    <property type="evidence" value="ECO:0000318"/>
    <property type="project" value="GO_Central"/>
</dbReference>
<dbReference type="GO" id="GO:0008017">
    <property type="term" value="F:microtubule binding"/>
    <property type="evidence" value="ECO:0000318"/>
    <property type="project" value="GO_Central"/>
</dbReference>
<dbReference type="GO" id="GO:0000281">
    <property type="term" value="P:mitotic cytokinesis"/>
    <property type="evidence" value="ECO:0000315"/>
    <property type="project" value="dictyBase"/>
</dbReference>
<dbReference type="CDD" id="cd08771">
    <property type="entry name" value="DLP_1"/>
    <property type="match status" value="1"/>
</dbReference>
<dbReference type="Gene3D" id="3.40.50.300">
    <property type="entry name" value="P-loop containing nucleotide triphosphate hydrolases"/>
    <property type="match status" value="1"/>
</dbReference>
<dbReference type="InterPro" id="IPR022812">
    <property type="entry name" value="Dynamin"/>
</dbReference>
<dbReference type="InterPro" id="IPR001401">
    <property type="entry name" value="Dynamin_GTPase"/>
</dbReference>
<dbReference type="InterPro" id="IPR045063">
    <property type="entry name" value="Dynamin_N"/>
</dbReference>
<dbReference type="InterPro" id="IPR030381">
    <property type="entry name" value="G_DYNAMIN_dom"/>
</dbReference>
<dbReference type="InterPro" id="IPR027417">
    <property type="entry name" value="P-loop_NTPase"/>
</dbReference>
<dbReference type="PANTHER" id="PTHR11566">
    <property type="entry name" value="DYNAMIN"/>
    <property type="match status" value="1"/>
</dbReference>
<dbReference type="PANTHER" id="PTHR11566:SF169">
    <property type="entry name" value="DYNAMIN-LIKE PROTEIN C"/>
    <property type="match status" value="1"/>
</dbReference>
<dbReference type="Pfam" id="PF00350">
    <property type="entry name" value="Dynamin_N"/>
    <property type="match status" value="1"/>
</dbReference>
<dbReference type="PRINTS" id="PR00195">
    <property type="entry name" value="DYNAMIN"/>
</dbReference>
<dbReference type="SMART" id="SM00053">
    <property type="entry name" value="DYNc"/>
    <property type="match status" value="1"/>
</dbReference>
<dbReference type="SUPFAM" id="SSF52540">
    <property type="entry name" value="P-loop containing nucleoside triphosphate hydrolases"/>
    <property type="match status" value="1"/>
</dbReference>
<dbReference type="PROSITE" id="PS51718">
    <property type="entry name" value="G_DYNAMIN_2"/>
    <property type="match status" value="1"/>
</dbReference>